<organism>
    <name type="scientific">Mus musculus</name>
    <name type="common">Mouse</name>
    <dbReference type="NCBI Taxonomy" id="10090"/>
    <lineage>
        <taxon>Eukaryota</taxon>
        <taxon>Metazoa</taxon>
        <taxon>Chordata</taxon>
        <taxon>Craniata</taxon>
        <taxon>Vertebrata</taxon>
        <taxon>Euteleostomi</taxon>
        <taxon>Mammalia</taxon>
        <taxon>Eutheria</taxon>
        <taxon>Euarchontoglires</taxon>
        <taxon>Glires</taxon>
        <taxon>Rodentia</taxon>
        <taxon>Myomorpha</taxon>
        <taxon>Muroidea</taxon>
        <taxon>Muridae</taxon>
        <taxon>Murinae</taxon>
        <taxon>Mus</taxon>
        <taxon>Mus</taxon>
    </lineage>
</organism>
<feature type="transit peptide" description="Mitochondrion" evidence="2">
    <location>
        <begin position="1"/>
        <end position="23"/>
    </location>
</feature>
<feature type="chain" id="PRO_0000239289" description="Alpha-ketoglutarate-dependent dioxygenase alkB homolog 7, mitochondrial">
    <location>
        <begin position="24"/>
        <end position="221"/>
    </location>
</feature>
<feature type="binding site" evidence="1">
    <location>
        <position position="121"/>
    </location>
    <ligand>
        <name>Fe cation</name>
        <dbReference type="ChEBI" id="CHEBI:24875"/>
        <note>catalytic</note>
    </ligand>
</feature>
<feature type="binding site" evidence="1">
    <location>
        <position position="123"/>
    </location>
    <ligand>
        <name>Fe cation</name>
        <dbReference type="ChEBI" id="CHEBI:24875"/>
        <note>catalytic</note>
    </ligand>
</feature>
<feature type="binding site" evidence="1">
    <location>
        <position position="165"/>
    </location>
    <ligand>
        <name>2-oxoglutarate</name>
        <dbReference type="ChEBI" id="CHEBI:16810"/>
    </ligand>
</feature>
<feature type="binding site" evidence="1">
    <location>
        <position position="177"/>
    </location>
    <ligand>
        <name>Fe cation</name>
        <dbReference type="ChEBI" id="CHEBI:24875"/>
        <note>catalytic</note>
    </ligand>
</feature>
<feature type="binding site" evidence="1">
    <location>
        <begin position="197"/>
        <end position="199"/>
    </location>
    <ligand>
        <name>2-oxoglutarate</name>
        <dbReference type="ChEBI" id="CHEBI:16810"/>
    </ligand>
</feature>
<feature type="binding site" evidence="1">
    <location>
        <position position="203"/>
    </location>
    <ligand>
        <name>2-oxoglutarate</name>
        <dbReference type="ChEBI" id="CHEBI:16810"/>
    </ligand>
</feature>
<feature type="splice variant" id="VSP_019132" description="In isoform 2." evidence="4">
    <location>
        <begin position="69"/>
        <end position="126"/>
    </location>
</feature>
<feature type="sequence conflict" description="In Ref. 1; BAB24999." evidence="5" ref="1">
    <original>R</original>
    <variation>L</variation>
    <location>
        <position position="191"/>
    </location>
</feature>
<accession>Q9D6Z0</accession>
<accession>Q8K1H3</accession>
<accession>Q9CY41</accession>
<accession>Q9D942</accession>
<proteinExistence type="evidence at protein level"/>
<sequence length="221" mass="24970">MAGSRRLAMRLLSGCAWVRGSDSAVLGRLRDEAVVHPGFLSQEEEDTLTRELEPQLRRRRYEYDHWDAAIHGFRETEKSCWSDASQVILQRVRAAAFGPDQSLLSPVHVLDLEPRGYIKPHVDSVKFCGSTIAGLSLLSPSVMKLVHTQEPEQWLELLLEPGSLYILRGSARYDFSHEILRDEESFFGEHRVPRGRRISVICRSLPEGMGPGRPEEPPPAC</sequence>
<reference key="1">
    <citation type="journal article" date="2005" name="Science">
        <title>The transcriptional landscape of the mammalian genome.</title>
        <authorList>
            <person name="Carninci P."/>
            <person name="Kasukawa T."/>
            <person name="Katayama S."/>
            <person name="Gough J."/>
            <person name="Frith M.C."/>
            <person name="Maeda N."/>
            <person name="Oyama R."/>
            <person name="Ravasi T."/>
            <person name="Lenhard B."/>
            <person name="Wells C."/>
            <person name="Kodzius R."/>
            <person name="Shimokawa K."/>
            <person name="Bajic V.B."/>
            <person name="Brenner S.E."/>
            <person name="Batalov S."/>
            <person name="Forrest A.R."/>
            <person name="Zavolan M."/>
            <person name="Davis M.J."/>
            <person name="Wilming L.G."/>
            <person name="Aidinis V."/>
            <person name="Allen J.E."/>
            <person name="Ambesi-Impiombato A."/>
            <person name="Apweiler R."/>
            <person name="Aturaliya R.N."/>
            <person name="Bailey T.L."/>
            <person name="Bansal M."/>
            <person name="Baxter L."/>
            <person name="Beisel K.W."/>
            <person name="Bersano T."/>
            <person name="Bono H."/>
            <person name="Chalk A.M."/>
            <person name="Chiu K.P."/>
            <person name="Choudhary V."/>
            <person name="Christoffels A."/>
            <person name="Clutterbuck D.R."/>
            <person name="Crowe M.L."/>
            <person name="Dalla E."/>
            <person name="Dalrymple B.P."/>
            <person name="de Bono B."/>
            <person name="Della Gatta G."/>
            <person name="di Bernardo D."/>
            <person name="Down T."/>
            <person name="Engstrom P."/>
            <person name="Fagiolini M."/>
            <person name="Faulkner G."/>
            <person name="Fletcher C.F."/>
            <person name="Fukushima T."/>
            <person name="Furuno M."/>
            <person name="Futaki S."/>
            <person name="Gariboldi M."/>
            <person name="Georgii-Hemming P."/>
            <person name="Gingeras T.R."/>
            <person name="Gojobori T."/>
            <person name="Green R.E."/>
            <person name="Gustincich S."/>
            <person name="Harbers M."/>
            <person name="Hayashi Y."/>
            <person name="Hensch T.K."/>
            <person name="Hirokawa N."/>
            <person name="Hill D."/>
            <person name="Huminiecki L."/>
            <person name="Iacono M."/>
            <person name="Ikeo K."/>
            <person name="Iwama A."/>
            <person name="Ishikawa T."/>
            <person name="Jakt M."/>
            <person name="Kanapin A."/>
            <person name="Katoh M."/>
            <person name="Kawasawa Y."/>
            <person name="Kelso J."/>
            <person name="Kitamura H."/>
            <person name="Kitano H."/>
            <person name="Kollias G."/>
            <person name="Krishnan S.P."/>
            <person name="Kruger A."/>
            <person name="Kummerfeld S.K."/>
            <person name="Kurochkin I.V."/>
            <person name="Lareau L.F."/>
            <person name="Lazarevic D."/>
            <person name="Lipovich L."/>
            <person name="Liu J."/>
            <person name="Liuni S."/>
            <person name="McWilliam S."/>
            <person name="Madan Babu M."/>
            <person name="Madera M."/>
            <person name="Marchionni L."/>
            <person name="Matsuda H."/>
            <person name="Matsuzawa S."/>
            <person name="Miki H."/>
            <person name="Mignone F."/>
            <person name="Miyake S."/>
            <person name="Morris K."/>
            <person name="Mottagui-Tabar S."/>
            <person name="Mulder N."/>
            <person name="Nakano N."/>
            <person name="Nakauchi H."/>
            <person name="Ng P."/>
            <person name="Nilsson R."/>
            <person name="Nishiguchi S."/>
            <person name="Nishikawa S."/>
            <person name="Nori F."/>
            <person name="Ohara O."/>
            <person name="Okazaki Y."/>
            <person name="Orlando V."/>
            <person name="Pang K.C."/>
            <person name="Pavan W.J."/>
            <person name="Pavesi G."/>
            <person name="Pesole G."/>
            <person name="Petrovsky N."/>
            <person name="Piazza S."/>
            <person name="Reed J."/>
            <person name="Reid J.F."/>
            <person name="Ring B.Z."/>
            <person name="Ringwald M."/>
            <person name="Rost B."/>
            <person name="Ruan Y."/>
            <person name="Salzberg S.L."/>
            <person name="Sandelin A."/>
            <person name="Schneider C."/>
            <person name="Schoenbach C."/>
            <person name="Sekiguchi K."/>
            <person name="Semple C.A."/>
            <person name="Seno S."/>
            <person name="Sessa L."/>
            <person name="Sheng Y."/>
            <person name="Shibata Y."/>
            <person name="Shimada H."/>
            <person name="Shimada K."/>
            <person name="Silva D."/>
            <person name="Sinclair B."/>
            <person name="Sperling S."/>
            <person name="Stupka E."/>
            <person name="Sugiura K."/>
            <person name="Sultana R."/>
            <person name="Takenaka Y."/>
            <person name="Taki K."/>
            <person name="Tammoja K."/>
            <person name="Tan S.L."/>
            <person name="Tang S."/>
            <person name="Taylor M.S."/>
            <person name="Tegner J."/>
            <person name="Teichmann S.A."/>
            <person name="Ueda H.R."/>
            <person name="van Nimwegen E."/>
            <person name="Verardo R."/>
            <person name="Wei C.L."/>
            <person name="Yagi K."/>
            <person name="Yamanishi H."/>
            <person name="Zabarovsky E."/>
            <person name="Zhu S."/>
            <person name="Zimmer A."/>
            <person name="Hide W."/>
            <person name="Bult C."/>
            <person name="Grimmond S.M."/>
            <person name="Teasdale R.D."/>
            <person name="Liu E.T."/>
            <person name="Brusic V."/>
            <person name="Quackenbush J."/>
            <person name="Wahlestedt C."/>
            <person name="Mattick J.S."/>
            <person name="Hume D.A."/>
            <person name="Kai C."/>
            <person name="Sasaki D."/>
            <person name="Tomaru Y."/>
            <person name="Fukuda S."/>
            <person name="Kanamori-Katayama M."/>
            <person name="Suzuki M."/>
            <person name="Aoki J."/>
            <person name="Arakawa T."/>
            <person name="Iida J."/>
            <person name="Imamura K."/>
            <person name="Itoh M."/>
            <person name="Kato T."/>
            <person name="Kawaji H."/>
            <person name="Kawagashira N."/>
            <person name="Kawashima T."/>
            <person name="Kojima M."/>
            <person name="Kondo S."/>
            <person name="Konno H."/>
            <person name="Nakano K."/>
            <person name="Ninomiya N."/>
            <person name="Nishio T."/>
            <person name="Okada M."/>
            <person name="Plessy C."/>
            <person name="Shibata K."/>
            <person name="Shiraki T."/>
            <person name="Suzuki S."/>
            <person name="Tagami M."/>
            <person name="Waki K."/>
            <person name="Watahiki A."/>
            <person name="Okamura-Oho Y."/>
            <person name="Suzuki H."/>
            <person name="Kawai J."/>
            <person name="Hayashizaki Y."/>
        </authorList>
    </citation>
    <scope>NUCLEOTIDE SEQUENCE [LARGE SCALE MRNA] (ISOFORMS 1 AND 2)</scope>
    <source>
        <strain>C57BL/6J</strain>
        <tissue>Liver</tissue>
        <tissue>Pancreas</tissue>
        <tissue>Tongue</tissue>
    </source>
</reference>
<reference key="2">
    <citation type="journal article" date="2009" name="PLoS Biol.">
        <title>Lineage-specific biology revealed by a finished genome assembly of the mouse.</title>
        <authorList>
            <person name="Church D.M."/>
            <person name="Goodstadt L."/>
            <person name="Hillier L.W."/>
            <person name="Zody M.C."/>
            <person name="Goldstein S."/>
            <person name="She X."/>
            <person name="Bult C.J."/>
            <person name="Agarwala R."/>
            <person name="Cherry J.L."/>
            <person name="DiCuccio M."/>
            <person name="Hlavina W."/>
            <person name="Kapustin Y."/>
            <person name="Meric P."/>
            <person name="Maglott D."/>
            <person name="Birtle Z."/>
            <person name="Marques A.C."/>
            <person name="Graves T."/>
            <person name="Zhou S."/>
            <person name="Teague B."/>
            <person name="Potamousis K."/>
            <person name="Churas C."/>
            <person name="Place M."/>
            <person name="Herschleb J."/>
            <person name="Runnheim R."/>
            <person name="Forrest D."/>
            <person name="Amos-Landgraf J."/>
            <person name="Schwartz D.C."/>
            <person name="Cheng Z."/>
            <person name="Lindblad-Toh K."/>
            <person name="Eichler E.E."/>
            <person name="Ponting C.P."/>
        </authorList>
    </citation>
    <scope>NUCLEOTIDE SEQUENCE [LARGE SCALE GENOMIC DNA]</scope>
    <source>
        <strain>C57BL/6J</strain>
    </source>
</reference>
<reference key="3">
    <citation type="journal article" date="2004" name="Genome Res.">
        <title>The status, quality, and expansion of the NIH full-length cDNA project: the Mammalian Gene Collection (MGC).</title>
        <authorList>
            <consortium name="The MGC Project Team"/>
        </authorList>
    </citation>
    <scope>NUCLEOTIDE SEQUENCE [LARGE SCALE MRNA] OF 4-221 (ISOFORM 1)</scope>
    <source>
        <tissue>Eye</tissue>
    </source>
</reference>
<reference key="4">
    <citation type="journal article" date="2010" name="Cell">
        <title>A tissue-specific atlas of mouse protein phosphorylation and expression.</title>
        <authorList>
            <person name="Huttlin E.L."/>
            <person name="Jedrychowski M.P."/>
            <person name="Elias J.E."/>
            <person name="Goswami T."/>
            <person name="Rad R."/>
            <person name="Beausoleil S.A."/>
            <person name="Villen J."/>
            <person name="Haas W."/>
            <person name="Sowa M.E."/>
            <person name="Gygi S.P."/>
        </authorList>
    </citation>
    <scope>IDENTIFICATION BY MASS SPECTROMETRY [LARGE SCALE ANALYSIS]</scope>
    <source>
        <tissue>Brain</tissue>
        <tissue>Heart</tissue>
        <tissue>Kidney</tissue>
        <tissue>Liver</tissue>
        <tissue>Testis</tissue>
    </source>
</reference>
<reference key="5">
    <citation type="journal article" date="2013" name="J. Mol. Cell Biol.">
        <title>Deletion of mouse Alkbh7 leads to obesity.</title>
        <authorList>
            <person name="Solberg A."/>
            <person name="Robertson A.B."/>
            <person name="Aronsen J.M."/>
            <person name="Rognmo O."/>
            <person name="Sjaastad I."/>
            <person name="Wisloff U."/>
            <person name="Klungland A."/>
        </authorList>
    </citation>
    <scope>FUNCTION</scope>
    <scope>SUBCELLULAR LOCATION</scope>
    <scope>DISRUPTION PHENOTYPE</scope>
    <scope>TISSUE SPECIFICITY</scope>
</reference>
<protein>
    <recommendedName>
        <fullName>Alpha-ketoglutarate-dependent dioxygenase alkB homolog 7, mitochondrial</fullName>
        <ecNumber>1.14.11.-</ecNumber>
    </recommendedName>
    <alternativeName>
        <fullName>Alkylated DNA repair protein alkB homolog 7</fullName>
    </alternativeName>
</protein>
<keyword id="KW-0025">Alternative splicing</keyword>
<keyword id="KW-0223">Dioxygenase</keyword>
<keyword id="KW-0408">Iron</keyword>
<keyword id="KW-0479">Metal-binding</keyword>
<keyword id="KW-0496">Mitochondrion</keyword>
<keyword id="KW-1210">Necrosis</keyword>
<keyword id="KW-0560">Oxidoreductase</keyword>
<keyword id="KW-1185">Reference proteome</keyword>
<keyword id="KW-0809">Transit peptide</keyword>
<evidence type="ECO:0000250" key="1">
    <source>
        <dbReference type="UniProtKB" id="Q9BT30"/>
    </source>
</evidence>
<evidence type="ECO:0000255" key="2"/>
<evidence type="ECO:0000269" key="3">
    <source>
    </source>
</evidence>
<evidence type="ECO:0000303" key="4">
    <source>
    </source>
</evidence>
<evidence type="ECO:0000305" key="5"/>
<gene>
    <name type="primary">Alkbh7</name>
    <name type="synonym">Spata11</name>
</gene>
<dbReference type="EC" id="1.14.11.-"/>
<dbReference type="EMBL" id="AK007380">
    <property type="protein sequence ID" value="BAB24999.1"/>
    <property type="molecule type" value="mRNA"/>
</dbReference>
<dbReference type="EMBL" id="AK009812">
    <property type="protein sequence ID" value="BAB26517.1"/>
    <property type="molecule type" value="mRNA"/>
</dbReference>
<dbReference type="EMBL" id="AK010930">
    <property type="protein sequence ID" value="BAB27274.1"/>
    <property type="molecule type" value="mRNA"/>
</dbReference>
<dbReference type="EMBL" id="GL456179">
    <property type="status" value="NOT_ANNOTATED_CDS"/>
    <property type="molecule type" value="Genomic_DNA"/>
</dbReference>
<dbReference type="EMBL" id="BC029677">
    <property type="protein sequence ID" value="AAH29677.1"/>
    <property type="status" value="ALT_INIT"/>
    <property type="molecule type" value="mRNA"/>
</dbReference>
<dbReference type="CCDS" id="CCDS28921.1">
    <molecule id="Q9D6Z0-1"/>
</dbReference>
<dbReference type="CCDS" id="CCDS57105.1">
    <molecule id="Q9D6Z0-2"/>
</dbReference>
<dbReference type="RefSeq" id="NP_079814.1">
    <molecule id="Q9D6Z0-1"/>
    <property type="nucleotide sequence ID" value="NM_025538.3"/>
</dbReference>
<dbReference type="RefSeq" id="NP_081648.1">
    <molecule id="Q9D6Z0-2"/>
    <property type="nucleotide sequence ID" value="NM_027372.1"/>
</dbReference>
<dbReference type="SMR" id="Q9D6Z0"/>
<dbReference type="FunCoup" id="Q9D6Z0">
    <property type="interactions" value="1106"/>
</dbReference>
<dbReference type="STRING" id="10090.ENSMUSP00000002737"/>
<dbReference type="SwissPalm" id="Q9D6Z0"/>
<dbReference type="PaxDb" id="10090-ENSMUSP00000002737"/>
<dbReference type="PeptideAtlas" id="Q9D6Z0"/>
<dbReference type="ProteomicsDB" id="296097">
    <molecule id="Q9D6Z0-1"/>
</dbReference>
<dbReference type="ProteomicsDB" id="296098">
    <molecule id="Q9D6Z0-2"/>
</dbReference>
<dbReference type="Pumba" id="Q9D6Z0"/>
<dbReference type="Antibodypedia" id="42538">
    <property type="antibodies" value="77 antibodies from 22 providers"/>
</dbReference>
<dbReference type="Ensembl" id="ENSMUST00000002737.7">
    <molecule id="Q9D6Z0-1"/>
    <property type="protein sequence ID" value="ENSMUSP00000002737.7"/>
    <property type="gene ID" value="ENSMUSG00000002661.15"/>
</dbReference>
<dbReference type="Ensembl" id="ENSMUST00000074141.14">
    <molecule id="Q9D6Z0-2"/>
    <property type="protein sequence ID" value="ENSMUSP00000073775.8"/>
    <property type="gene ID" value="ENSMUSG00000002661.15"/>
</dbReference>
<dbReference type="GeneID" id="66400"/>
<dbReference type="KEGG" id="mmu:66400"/>
<dbReference type="UCSC" id="uc008ddn.2">
    <molecule id="Q9D6Z0-1"/>
    <property type="organism name" value="mouse"/>
</dbReference>
<dbReference type="UCSC" id="uc012avz.1">
    <molecule id="Q9D6Z0-2"/>
    <property type="organism name" value="mouse"/>
</dbReference>
<dbReference type="AGR" id="MGI:1913650"/>
<dbReference type="CTD" id="84266"/>
<dbReference type="MGI" id="MGI:1913650">
    <property type="gene designation" value="Alkbh7"/>
</dbReference>
<dbReference type="VEuPathDB" id="HostDB:ENSMUSG00000002661"/>
<dbReference type="eggNOG" id="KOG4176">
    <property type="taxonomic scope" value="Eukaryota"/>
</dbReference>
<dbReference type="GeneTree" id="ENSGT00390000014585"/>
<dbReference type="HOGENOM" id="CLU_092162_1_0_1"/>
<dbReference type="InParanoid" id="Q9D6Z0"/>
<dbReference type="OMA" id="VEPHMKR"/>
<dbReference type="OrthoDB" id="28127at2759"/>
<dbReference type="PhylomeDB" id="Q9D6Z0"/>
<dbReference type="TreeFam" id="TF314197"/>
<dbReference type="BioGRID-ORCS" id="66400">
    <property type="hits" value="2 hits in 76 CRISPR screens"/>
</dbReference>
<dbReference type="ChiTaRS" id="Alkbh7">
    <property type="organism name" value="mouse"/>
</dbReference>
<dbReference type="PRO" id="PR:Q9D6Z0"/>
<dbReference type="Proteomes" id="UP000000589">
    <property type="component" value="Chromosome 17"/>
</dbReference>
<dbReference type="RNAct" id="Q9D6Z0">
    <property type="molecule type" value="protein"/>
</dbReference>
<dbReference type="Bgee" id="ENSMUSG00000002661">
    <property type="expression patterns" value="Expressed in interventricular septum and 228 other cell types or tissues"/>
</dbReference>
<dbReference type="GO" id="GO:0005759">
    <property type="term" value="C:mitochondrial matrix"/>
    <property type="evidence" value="ECO:0000314"/>
    <property type="project" value="UniProtKB"/>
</dbReference>
<dbReference type="GO" id="GO:0005739">
    <property type="term" value="C:mitochondrion"/>
    <property type="evidence" value="ECO:0007005"/>
    <property type="project" value="MGI"/>
</dbReference>
<dbReference type="GO" id="GO:0051213">
    <property type="term" value="F:dioxygenase activity"/>
    <property type="evidence" value="ECO:0007669"/>
    <property type="project" value="UniProtKB-KW"/>
</dbReference>
<dbReference type="GO" id="GO:0046872">
    <property type="term" value="F:metal ion binding"/>
    <property type="evidence" value="ECO:0007669"/>
    <property type="project" value="UniProtKB-KW"/>
</dbReference>
<dbReference type="GO" id="GO:0006974">
    <property type="term" value="P:DNA damage response"/>
    <property type="evidence" value="ECO:0000250"/>
    <property type="project" value="UniProtKB"/>
</dbReference>
<dbReference type="GO" id="GO:0006631">
    <property type="term" value="P:fatty acid metabolic process"/>
    <property type="evidence" value="ECO:0000315"/>
    <property type="project" value="UniProtKB"/>
</dbReference>
<dbReference type="GO" id="GO:0010883">
    <property type="term" value="P:regulation of lipid storage"/>
    <property type="evidence" value="ECO:0000315"/>
    <property type="project" value="UniProtKB"/>
</dbReference>
<dbReference type="GO" id="GO:1902445">
    <property type="term" value="P:regulation of mitochondrial membrane permeability involved in programmed necrotic cell death"/>
    <property type="evidence" value="ECO:0000250"/>
    <property type="project" value="UniProtKB"/>
</dbReference>
<dbReference type="FunFam" id="2.60.120.590:FF:000009">
    <property type="entry name" value="Alpha-ketoglutarate-dependent dioxygenase alkB homolog 7, mitochondrial"/>
    <property type="match status" value="1"/>
</dbReference>
<dbReference type="Gene3D" id="2.60.120.590">
    <property type="entry name" value="Alpha-ketoglutarate-dependent dioxygenase AlkB-like"/>
    <property type="match status" value="1"/>
</dbReference>
<dbReference type="InterPro" id="IPR027450">
    <property type="entry name" value="AlkB-like"/>
</dbReference>
<dbReference type="InterPro" id="IPR037151">
    <property type="entry name" value="AlkB-like_sf"/>
</dbReference>
<dbReference type="InterPro" id="IPR032870">
    <property type="entry name" value="ALKBH7-like"/>
</dbReference>
<dbReference type="PANTHER" id="PTHR21052:SF0">
    <property type="entry name" value="ALPHA-KETOGLUTARATE-DEPENDENT DIOXYGENASE ALKB HOMOLOG 7, MITOCHONDRIAL"/>
    <property type="match status" value="1"/>
</dbReference>
<dbReference type="PANTHER" id="PTHR21052">
    <property type="entry name" value="SPERMATOGENESIS ASSOCIATED 11-RELATED"/>
    <property type="match status" value="1"/>
</dbReference>
<dbReference type="Pfam" id="PF13532">
    <property type="entry name" value="2OG-FeII_Oxy_2"/>
    <property type="match status" value="1"/>
</dbReference>
<dbReference type="SUPFAM" id="SSF51197">
    <property type="entry name" value="Clavaminate synthase-like"/>
    <property type="match status" value="1"/>
</dbReference>
<comment type="function">
    <text evidence="1 3">May function as protein hydroxylase; can catalyze auto-hydroxylation at Leu-110 (in vitro), but this activity may be due to the absence of the true substrate. Required to induce programmed necrosis in response to DNA damage caused by cytotoxic alkylating agents. Acts by triggering the collapse of mitochondrial membrane potential and loss of mitochondrial function that leads to energy depletion and cell death. ALKBH7-mediated necrosis is probably required to prevent the accumulation of cells with DNA damage. Does not display DNA demethylase activity (By similarity). Involved in fatty acid metabolism.</text>
</comment>
<comment type="cofactor">
    <cofactor evidence="1">
        <name>Fe(2+)</name>
        <dbReference type="ChEBI" id="CHEBI:29033"/>
    </cofactor>
    <text evidence="1">Binds 1 Fe(2+) ion per subunit.</text>
</comment>
<comment type="subcellular location">
    <subcellularLocation>
        <location evidence="3">Mitochondrion matrix</location>
    </subcellularLocation>
</comment>
<comment type="alternative products">
    <event type="alternative splicing"/>
    <isoform>
        <id>Q9D6Z0-1</id>
        <name>1</name>
        <sequence type="displayed"/>
    </isoform>
    <isoform>
        <id>Q9D6Z0-2</id>
        <name>2</name>
        <sequence type="described" ref="VSP_019132"/>
    </isoform>
</comment>
<comment type="tissue specificity">
    <text evidence="3">Widely expressed.</text>
</comment>
<comment type="disruption phenotype">
    <text evidence="3">Increased body weight and body fat, a phenotype amplified under high-fat diet.</text>
</comment>
<comment type="similarity">
    <text evidence="5">Belongs to the alkB family.</text>
</comment>
<comment type="sequence caution" evidence="5">
    <conflict type="erroneous initiation">
        <sequence resource="EMBL-CDS" id="AAH29677"/>
    </conflict>
</comment>
<name>ALKB7_MOUSE</name>